<organism>
    <name type="scientific">Escherichia coli</name>
    <dbReference type="NCBI Taxonomy" id="562"/>
    <lineage>
        <taxon>Bacteria</taxon>
        <taxon>Pseudomonadati</taxon>
        <taxon>Pseudomonadota</taxon>
        <taxon>Gammaproteobacteria</taxon>
        <taxon>Enterobacterales</taxon>
        <taxon>Enterobacteriaceae</taxon>
        <taxon>Escherichia</taxon>
    </lineage>
</organism>
<gene>
    <name evidence="6" type="primary">res</name>
    <name evidence="6" type="synonym">ecoP15Ires</name>
</gene>
<protein>
    <recommendedName>
        <fullName evidence="6">Type III restriction-modification enzyme EcoP15I Res subunit</fullName>
        <ecNumber evidence="2">3.1.21.5</ecNumber>
    </recommendedName>
    <alternativeName>
        <fullName evidence="5">Type III restriction enzyme EcoP15I</fullName>
    </alternativeName>
</protein>
<sequence length="970" mass="110957">MSKGFTLEKNLPHQKAGVDAVMNVFVSATPHLTDNVAVRLLANPELKLSEQQYYNNIKNVQAFNGIAHSKDNHNAKSNIIDVSMETGTGKTYTYIKTIFDLNKSFGINKFIIIVPTLSIKAGTVNFLKSDALKEHFRDDYKRELRTYVVESQKNAGKNTKSYMPQAIHDFVEASNFNKKYIHVLVINSGMINSKSLTDTYDTGLLDNQFNTPVDALRAVKPFIIIDEPHRFPTGKKTWENIEKFNAQYIIRYGATFSEGYKNLVYRLTAVDAFNDDLVKGIDAYIEDIVGDGNANLKFVKSDGKEATFELNENNNKKSFKLAKGESLSKTHSAIHDLTLDALNKSTAVLSNGIELKIGSSINPYSYDQTLADNMMRKAVKEHFKLEKELLTQRPRIKPLTLFFIDDIEGYRDGNDISGSLKTKFEEYVLAEANELLKTEQDAFYKNYLEKTVTNISSVHGGYFSKDNSDKDDKIEQEINEILHDKELLLSLDNPRRFIFSKWTLREGWDNPNVFQICKLRSSGSTTSKLQEVGRGLRLPVNEYMCRVKDRNFTLKYYVDFTEKDFVDSLVKEVNESSFKERVPSKFTQELKEQIMAQYPELSSRALMNELFNDEIIDDNDNFKDSDAYSRLKSKYPAAFPIGVKPGKIKKATDGKRRTKMRVGKFSELKELWDLINQKAVIEYKINSESEFLSIFKSFMLEETERFTKSGVHTRIDKIYIHNDMAMSKSIVSDDDDFAKLNTMSYREFLDNLSQTIFVKHGTLHKVFCDIKDTINITEYLNIQTIRKIKSGFSKYLLNNSFNKFSLGYNLISGSIHPTKFTNADGNPLGEVLSSDLGVLQDNAKAPLDTYLFEEVFYDSELERRNITDREIQSVVVFSKIPKNSIKIPVAGGYTYSPDFAYVVKTAEGDYLNFIIETKNVDSKDSLRLEEKRKIEHAQALFNQISQSVKVEFRTQFANDDIYQLIKSALP</sequence>
<evidence type="ECO:0000250" key="1">
    <source>
        <dbReference type="UniProtKB" id="P08764"/>
    </source>
</evidence>
<evidence type="ECO:0000269" key="2">
    <source>
    </source>
</evidence>
<evidence type="ECO:0000269" key="3">
    <source>
    </source>
</evidence>
<evidence type="ECO:0000269" key="4">
    <source>
    </source>
</evidence>
<evidence type="ECO:0000303" key="5">
    <source>
    </source>
</evidence>
<evidence type="ECO:0000303" key="6">
    <source>
    </source>
</evidence>
<evidence type="ECO:0000305" key="7"/>
<evidence type="ECO:0000305" key="8">
    <source>
    </source>
</evidence>
<evidence type="ECO:0007744" key="9">
    <source>
        <dbReference type="PDB" id="4ZCF"/>
    </source>
</evidence>
<evidence type="ECO:0007829" key="10">
    <source>
        <dbReference type="PDB" id="4ZCF"/>
    </source>
</evidence>
<keyword id="KW-0002">3D-structure</keyword>
<keyword id="KW-0067">ATP-binding</keyword>
<keyword id="KW-0238">DNA-binding</keyword>
<keyword id="KW-0255">Endonuclease</keyword>
<keyword id="KW-0347">Helicase</keyword>
<keyword id="KW-0378">Hydrolase</keyword>
<keyword id="KW-0540">Nuclease</keyword>
<keyword id="KW-0547">Nucleotide-binding</keyword>
<keyword id="KW-0614">Plasmid</keyword>
<keyword id="KW-0680">Restriction system</keyword>
<keyword id="KW-0949">S-adenosyl-L-methionine</keyword>
<reference key="1">
    <citation type="journal article" date="2004" name="J. Biotechnol.">
        <title>Overexpression and affinity chromatography purification of the Type III restriction endonuclease EcoP15I for use in transcriptome analysis.</title>
        <authorList>
            <person name="Moencke-Buchner E."/>
            <person name="Mackeldanz P."/>
            <person name="Krueger D.H."/>
            <person name="Reuter M."/>
        </authorList>
    </citation>
    <scope>NUCLEOTIDE SEQUENCE [GENOMIC DNA]</scope>
    <scope>FUNCTION</scope>
    <source>
        <plasmid>p15B</plasmid>
    </source>
</reference>
<reference key="2">
    <citation type="journal article" date="2001" name="J. Mol. Biol.">
        <title>Subunit assembly and mode of DNA cleavage of the type III restriction endonucleases EcoP1I and EcoP15I.</title>
        <authorList>
            <person name="Janscak P."/>
            <person name="Sandmeier U."/>
            <person name="Szczelkun M.D."/>
            <person name="Bickle T.A."/>
        </authorList>
    </citation>
    <scope>FUNCTION</scope>
    <scope>SUBSTRATE SPECIFICITY</scope>
    <scope>CATALYTIC ACTIVITY</scope>
    <scope>SUBUNIT</scope>
    <source>
        <plasmid>p15B</plasmid>
    </source>
</reference>
<reference key="3">
    <citation type="journal article" date="2003" name="Nucleic Acids Res.">
        <title>A nomenclature for restriction enzymes, DNA methyltransferases, homing endonucleases and their genes.</title>
        <authorList>
            <person name="Roberts R.J."/>
            <person name="Belfort M."/>
            <person name="Bestor T."/>
            <person name="Bhagwat A.S."/>
            <person name="Bickle T.A."/>
            <person name="Bitinaite J."/>
            <person name="Blumenthal R.M."/>
            <person name="Degtyarev S.K."/>
            <person name="Dryden D.T."/>
            <person name="Dybvig K."/>
            <person name="Firman K."/>
            <person name="Gromova E.S."/>
            <person name="Gumport R.I."/>
            <person name="Halford S.E."/>
            <person name="Hattman S."/>
            <person name="Heitman J."/>
            <person name="Hornby D.P."/>
            <person name="Janulaitis A."/>
            <person name="Jeltsch A."/>
            <person name="Josephsen J."/>
            <person name="Kiss A."/>
            <person name="Klaenhammer T.R."/>
            <person name="Kobayashi I."/>
            <person name="Kong H."/>
            <person name="Krueger D.H."/>
            <person name="Lacks S."/>
            <person name="Marinus M.G."/>
            <person name="Miyahara M."/>
            <person name="Morgan R.D."/>
            <person name="Murray N.E."/>
            <person name="Nagaraja V."/>
            <person name="Piekarowicz A."/>
            <person name="Pingoud A."/>
            <person name="Raleigh E."/>
            <person name="Rao D.N."/>
            <person name="Reich N."/>
            <person name="Repin V.E."/>
            <person name="Selker E.U."/>
            <person name="Shaw P.C."/>
            <person name="Stein D.C."/>
            <person name="Stoddard B.L."/>
            <person name="Szybalski W."/>
            <person name="Trautner T.A."/>
            <person name="Van Etten J.L."/>
            <person name="Vitor J.M."/>
            <person name="Wilson G.G."/>
            <person name="Xu S.Y."/>
        </authorList>
    </citation>
    <scope>NOMENCLATURE</scope>
</reference>
<reference evidence="9" key="4">
    <citation type="journal article" date="2015" name="Nat. Commun.">
        <title>Structural basis of asymmetric DNA methylation and ATP-triggered long-range diffusion by EcoP15I.</title>
        <authorList>
            <person name="Gupta Y.K."/>
            <person name="Chan S.H."/>
            <person name="Xu S.Y."/>
            <person name="Aggarwal A.K."/>
        </authorList>
    </citation>
    <scope>X-RAY CRYSTALLOGRAPHY (2.60 ANGSTROMS) IN COMPLEX WITH MOD; AMP AND DNA</scope>
    <scope>DOMAIN</scope>
</reference>
<name>T3RE_ECOLX</name>
<comment type="function">
    <text evidence="2 3 4 8">A type III restriction enzyme that recognizes 2 inversely oriented double-stranded sequences 5'-CAGCAG-3' and cleaves DNA 25-27 base pairs downstream of one site. DNA restriction requires both the Res and Mod subunits (PubMed:11178902, PubMed:15464603). DNA topology affects its action; relaxed and negatively supercoiled DNA are digested but positively supercoiled DNA is not a good substrate (PubMed:11178902). Interacts with DNA approximately one half-turn downstream of the recognition site (PubMed:26067164). After binding to one recognition site undergoes random one-dimensional diffusion along DNA until it collides with a stationary enzyme bound to the second DNA site, which is when DNA cleavage occurs (Probable).</text>
</comment>
<comment type="catalytic activity">
    <reaction evidence="2">
        <text>Endonucleolytic cleavage of DNA to give specific double-stranded fragments with terminal 5'-phosphates.</text>
        <dbReference type="EC" id="3.1.21.5"/>
    </reaction>
</comment>
<comment type="cofactor">
    <cofactor>
        <name>Mg(2+)</name>
        <dbReference type="ChEBI" id="CHEBI:18420"/>
    </cofactor>
</comment>
<comment type="cofactor">
    <cofactor evidence="1">
        <name>S-adenosyl-L-methionine</name>
        <dbReference type="ChEBI" id="CHEBI:59789"/>
    </cofactor>
</comment>
<comment type="subunit">
    <text evidence="2 4">A heterotetramer with stoichiometry Res(2)Mod(2) (PubMed:11178902). A heterotrimer with stoichiometry Res(1)Mod(2) (PubMed:26067164).</text>
</comment>
<comment type="domain">
    <text evidence="4 9">Has a helicase-type domain in its N-terminus and an endonuclease-type domain in its C-terminus. AMP lies in a cleft in the helicase domain.</text>
</comment>
<comment type="similarity">
    <text evidence="7">Belongs to the type III restriction-modification system Res protein family.</text>
</comment>
<proteinExistence type="evidence at protein level"/>
<geneLocation type="plasmid">
    <name>p15B</name>
</geneLocation>
<accession>Q5ZND2</accession>
<dbReference type="EC" id="3.1.21.5" evidence="2"/>
<dbReference type="EMBL" id="AJ634453">
    <property type="protein sequence ID" value="CAG24073.1"/>
    <property type="molecule type" value="Genomic_DNA"/>
</dbReference>
<dbReference type="RefSeq" id="WP_001569359.1">
    <property type="nucleotide sequence ID" value="NZ_VDAV01000001.1"/>
</dbReference>
<dbReference type="PDB" id="4ZCF">
    <property type="method" value="X-ray"/>
    <property type="resolution" value="2.60 A"/>
    <property type="chains" value="C=1-970"/>
</dbReference>
<dbReference type="PDBsum" id="4ZCF"/>
<dbReference type="SMR" id="Q5ZND2"/>
<dbReference type="REBASE" id="987">
    <property type="entry name" value="EcoP15I"/>
</dbReference>
<dbReference type="PATRIC" id="fig|562.6968.peg.3407"/>
<dbReference type="BRENDA" id="3.1.21.4">
    <property type="organism ID" value="2026"/>
</dbReference>
<dbReference type="BRENDA" id="3.1.21.5">
    <property type="organism ID" value="2026"/>
</dbReference>
<dbReference type="EvolutionaryTrace" id="Q5ZND2"/>
<dbReference type="GO" id="GO:0005524">
    <property type="term" value="F:ATP binding"/>
    <property type="evidence" value="ECO:0007669"/>
    <property type="project" value="UniProtKB-KW"/>
</dbReference>
<dbReference type="GO" id="GO:0003677">
    <property type="term" value="F:DNA binding"/>
    <property type="evidence" value="ECO:0007669"/>
    <property type="project" value="UniProtKB-KW"/>
</dbReference>
<dbReference type="GO" id="GO:0004386">
    <property type="term" value="F:helicase activity"/>
    <property type="evidence" value="ECO:0007669"/>
    <property type="project" value="UniProtKB-KW"/>
</dbReference>
<dbReference type="GO" id="GO:0015668">
    <property type="term" value="F:type III site-specific deoxyribonuclease activity"/>
    <property type="evidence" value="ECO:0007669"/>
    <property type="project" value="InterPro"/>
</dbReference>
<dbReference type="GO" id="GO:0009307">
    <property type="term" value="P:DNA restriction-modification system"/>
    <property type="evidence" value="ECO:0007669"/>
    <property type="project" value="UniProtKB-KW"/>
</dbReference>
<dbReference type="Gene3D" id="3.40.50.300">
    <property type="entry name" value="P-loop containing nucleotide triphosphate hydrolases"/>
    <property type="match status" value="2"/>
</dbReference>
<dbReference type="InterPro" id="IPR006935">
    <property type="entry name" value="Helicase/UvrB_N"/>
</dbReference>
<dbReference type="InterPro" id="IPR027417">
    <property type="entry name" value="P-loop_NTPase"/>
</dbReference>
<dbReference type="InterPro" id="IPR045572">
    <property type="entry name" value="RE_endonuc_C"/>
</dbReference>
<dbReference type="NCBIfam" id="NF012027">
    <property type="entry name" value="PRK15483.1"/>
    <property type="match status" value="1"/>
</dbReference>
<dbReference type="Pfam" id="PF19778">
    <property type="entry name" value="RE_endonuc"/>
    <property type="match status" value="1"/>
</dbReference>
<dbReference type="Pfam" id="PF04851">
    <property type="entry name" value="ResIII"/>
    <property type="match status" value="1"/>
</dbReference>
<dbReference type="SUPFAM" id="SSF52540">
    <property type="entry name" value="P-loop containing nucleoside triphosphate hydrolases"/>
    <property type="match status" value="2"/>
</dbReference>
<feature type="chain" id="PRO_0000454399" description="Type III restriction-modification enzyme EcoP15I Res subunit">
    <location>
        <begin position="1"/>
        <end position="970"/>
    </location>
</feature>
<feature type="region of interest" description="Helicase-like domain" evidence="4">
    <location>
        <begin position="75"/>
        <end position="540"/>
    </location>
</feature>
<feature type="region of interest" description="Endonuclease domain" evidence="4">
    <location>
        <begin position="894"/>
        <end position="918"/>
    </location>
</feature>
<feature type="binding site" evidence="4 9">
    <location>
        <position position="91"/>
    </location>
    <ligand>
        <name>AMP</name>
        <dbReference type="ChEBI" id="CHEBI:456215"/>
    </ligand>
</feature>
<feature type="binding site" evidence="4 9">
    <location>
        <position position="122"/>
    </location>
    <ligand>
        <name>AMP</name>
        <dbReference type="ChEBI" id="CHEBI:456215"/>
    </ligand>
</feature>
<feature type="binding site" evidence="4 9">
    <location>
        <position position="126"/>
    </location>
    <ligand>
        <name>AMP</name>
        <dbReference type="ChEBI" id="CHEBI:456215"/>
    </ligand>
</feature>
<feature type="binding site" evidence="4 9">
    <location>
        <position position="226"/>
    </location>
    <ligand>
        <name>AMP</name>
        <dbReference type="ChEBI" id="CHEBI:456215"/>
    </ligand>
</feature>
<feature type="helix" evidence="10">
    <location>
        <begin position="12"/>
        <end position="22"/>
    </location>
</feature>
<feature type="helix" evidence="10">
    <location>
        <begin position="23"/>
        <end position="25"/>
    </location>
</feature>
<feature type="strand" evidence="10">
    <location>
        <begin position="29"/>
        <end position="31"/>
    </location>
</feature>
<feature type="helix" evidence="10">
    <location>
        <begin position="36"/>
        <end position="41"/>
    </location>
</feature>
<feature type="strand" evidence="10">
    <location>
        <begin position="45"/>
        <end position="47"/>
    </location>
</feature>
<feature type="helix" evidence="10">
    <location>
        <begin position="50"/>
        <end position="64"/>
    </location>
</feature>
<feature type="turn" evidence="10">
    <location>
        <begin position="70"/>
        <end position="72"/>
    </location>
</feature>
<feature type="strand" evidence="10">
    <location>
        <begin position="79"/>
        <end position="84"/>
    </location>
</feature>
<feature type="helix" evidence="10">
    <location>
        <begin position="90"/>
        <end position="105"/>
    </location>
</feature>
<feature type="strand" evidence="10">
    <location>
        <begin position="109"/>
        <end position="113"/>
    </location>
</feature>
<feature type="helix" evidence="10">
    <location>
        <begin position="117"/>
        <end position="128"/>
    </location>
</feature>
<feature type="helix" evidence="10">
    <location>
        <begin position="130"/>
        <end position="140"/>
    </location>
</feature>
<feature type="strand" evidence="10">
    <location>
        <begin position="143"/>
        <end position="148"/>
    </location>
</feature>
<feature type="helix" evidence="10">
    <location>
        <begin position="165"/>
        <end position="172"/>
    </location>
</feature>
<feature type="strand" evidence="10">
    <location>
        <begin position="180"/>
        <end position="186"/>
    </location>
</feature>
<feature type="helix" evidence="10">
    <location>
        <begin position="188"/>
        <end position="191"/>
    </location>
</feature>
<feature type="helix" evidence="10">
    <location>
        <begin position="194"/>
        <end position="196"/>
    </location>
</feature>
<feature type="turn" evidence="10">
    <location>
        <begin position="205"/>
        <end position="208"/>
    </location>
</feature>
<feature type="strand" evidence="10">
    <location>
        <begin position="209"/>
        <end position="211"/>
    </location>
</feature>
<feature type="helix" evidence="10">
    <location>
        <begin position="212"/>
        <end position="217"/>
    </location>
</feature>
<feature type="strand" evidence="10">
    <location>
        <begin position="222"/>
        <end position="227"/>
    </location>
</feature>
<feature type="helix" evidence="10">
    <location>
        <begin position="228"/>
        <end position="230"/>
    </location>
</feature>
<feature type="helix" evidence="10">
    <location>
        <begin position="236"/>
        <end position="242"/>
    </location>
</feature>
<feature type="strand" evidence="10">
    <location>
        <begin position="249"/>
        <end position="254"/>
    </location>
</feature>
<feature type="strand" evidence="10">
    <location>
        <begin position="261"/>
        <end position="267"/>
    </location>
</feature>
<feature type="helix" evidence="10">
    <location>
        <begin position="269"/>
        <end position="274"/>
    </location>
</feature>
<feature type="strand" evidence="10">
    <location>
        <begin position="280"/>
        <end position="285"/>
    </location>
</feature>
<feature type="strand" evidence="10">
    <location>
        <begin position="295"/>
        <end position="298"/>
    </location>
</feature>
<feature type="strand" evidence="10">
    <location>
        <begin position="303"/>
        <end position="307"/>
    </location>
</feature>
<feature type="strand" evidence="10">
    <location>
        <begin position="320"/>
        <end position="322"/>
    </location>
</feature>
<feature type="strand" evidence="10">
    <location>
        <begin position="331"/>
        <end position="333"/>
    </location>
</feature>
<feature type="strand" evidence="10">
    <location>
        <begin position="338"/>
        <end position="341"/>
    </location>
</feature>
<feature type="strand" evidence="10">
    <location>
        <begin position="347"/>
        <end position="349"/>
    </location>
</feature>
<feature type="helix" evidence="10">
    <location>
        <begin position="363"/>
        <end position="366"/>
    </location>
</feature>
<feature type="helix" evidence="10">
    <location>
        <begin position="368"/>
        <end position="389"/>
    </location>
</feature>
<feature type="strand" evidence="10">
    <location>
        <begin position="399"/>
        <end position="404"/>
    </location>
</feature>
<feature type="helix" evidence="10">
    <location>
        <begin position="421"/>
        <end position="434"/>
    </location>
</feature>
<feature type="helix" evidence="10">
    <location>
        <begin position="445"/>
        <end position="455"/>
    </location>
</feature>
<feature type="strand" evidence="10">
    <location>
        <begin position="459"/>
        <end position="461"/>
    </location>
</feature>
<feature type="helix" evidence="10">
    <location>
        <begin position="475"/>
        <end position="483"/>
    </location>
</feature>
<feature type="helix" evidence="10">
    <location>
        <begin position="485"/>
        <end position="488"/>
    </location>
</feature>
<feature type="strand" evidence="10">
    <location>
        <begin position="497"/>
        <end position="501"/>
    </location>
</feature>
<feature type="helix" evidence="10">
    <location>
        <begin position="502"/>
        <end position="507"/>
    </location>
</feature>
<feature type="strand" evidence="10">
    <location>
        <begin position="513"/>
        <end position="518"/>
    </location>
</feature>
<feature type="helix" evidence="10">
    <location>
        <begin position="528"/>
        <end position="532"/>
    </location>
</feature>
<feature type="helix" evidence="10">
    <location>
        <begin position="533"/>
        <end position="535"/>
    </location>
</feature>
<feature type="strand" evidence="10">
    <location>
        <begin position="553"/>
        <end position="558"/>
    </location>
</feature>
<feature type="helix" evidence="10">
    <location>
        <begin position="565"/>
        <end position="576"/>
    </location>
</feature>
<feature type="turn" evidence="10">
    <location>
        <begin position="588"/>
        <end position="590"/>
    </location>
</feature>
<feature type="strand" evidence="10">
    <location>
        <begin position="591"/>
        <end position="593"/>
    </location>
</feature>
<feature type="helix" evidence="10">
    <location>
        <begin position="621"/>
        <end position="632"/>
    </location>
</feature>
<feature type="helix" evidence="10">
    <location>
        <begin position="670"/>
        <end position="675"/>
    </location>
</feature>
<feature type="helix" evidence="10">
    <location>
        <begin position="688"/>
        <end position="701"/>
    </location>
</feature>
<feature type="helix" evidence="10">
    <location>
        <begin position="745"/>
        <end position="756"/>
    </location>
</feature>
<feature type="helix" evidence="10">
    <location>
        <begin position="760"/>
        <end position="769"/>
    </location>
</feature>
<feature type="helix" evidence="10">
    <location>
        <begin position="782"/>
        <end position="798"/>
    </location>
</feature>